<name>PTER_TETNG</name>
<feature type="chain" id="PRO_0000388669" description="N-acetyltaurine hydrolase">
    <location>
        <begin position="1"/>
        <end position="349"/>
    </location>
</feature>
<feature type="binding site" evidence="1">
    <location>
        <position position="26"/>
    </location>
    <ligand>
        <name>a divalent metal cation</name>
        <dbReference type="ChEBI" id="CHEBI:60240"/>
        <label>1</label>
    </ligand>
</feature>
<feature type="binding site" evidence="1">
    <location>
        <position position="28"/>
    </location>
    <ligand>
        <name>a divalent metal cation</name>
        <dbReference type="ChEBI" id="CHEBI:60240"/>
        <label>1</label>
    </ligand>
</feature>
<feature type="binding site" evidence="1">
    <location>
        <position position="169"/>
    </location>
    <ligand>
        <name>a divalent metal cation</name>
        <dbReference type="ChEBI" id="CHEBI:60240"/>
        <label>1</label>
    </ligand>
</feature>
<feature type="binding site" evidence="1">
    <location>
        <position position="169"/>
    </location>
    <ligand>
        <name>a divalent metal cation</name>
        <dbReference type="ChEBI" id="CHEBI:60240"/>
        <label>2</label>
    </ligand>
</feature>
<feature type="binding site" evidence="1">
    <location>
        <position position="201"/>
    </location>
    <ligand>
        <name>a divalent metal cation</name>
        <dbReference type="ChEBI" id="CHEBI:60240"/>
        <label>2</label>
    </ligand>
</feature>
<feature type="binding site" evidence="1">
    <location>
        <position position="230"/>
    </location>
    <ligand>
        <name>a divalent metal cation</name>
        <dbReference type="ChEBI" id="CHEBI:60240"/>
        <label>2</label>
    </ligand>
</feature>
<feature type="binding site" evidence="1">
    <location>
        <position position="298"/>
    </location>
    <ligand>
        <name>a divalent metal cation</name>
        <dbReference type="ChEBI" id="CHEBI:60240"/>
        <label>1</label>
    </ligand>
</feature>
<reference key="1">
    <citation type="journal article" date="2004" name="Nature">
        <title>Genome duplication in the teleost fish Tetraodon nigroviridis reveals the early vertebrate proto-karyotype.</title>
        <authorList>
            <person name="Jaillon O."/>
            <person name="Aury J.-M."/>
            <person name="Brunet F."/>
            <person name="Petit J.-L."/>
            <person name="Stange-Thomann N."/>
            <person name="Mauceli E."/>
            <person name="Bouneau L."/>
            <person name="Fischer C."/>
            <person name="Ozouf-Costaz C."/>
            <person name="Bernot A."/>
            <person name="Nicaud S."/>
            <person name="Jaffe D."/>
            <person name="Fisher S."/>
            <person name="Lutfalla G."/>
            <person name="Dossat C."/>
            <person name="Segurens B."/>
            <person name="Dasilva C."/>
            <person name="Salanoubat M."/>
            <person name="Levy M."/>
            <person name="Boudet N."/>
            <person name="Castellano S."/>
            <person name="Anthouard V."/>
            <person name="Jubin C."/>
            <person name="Castelli V."/>
            <person name="Katinka M."/>
            <person name="Vacherie B."/>
            <person name="Biemont C."/>
            <person name="Skalli Z."/>
            <person name="Cattolico L."/>
            <person name="Poulain J."/>
            <person name="De Berardinis V."/>
            <person name="Cruaud C."/>
            <person name="Duprat S."/>
            <person name="Brottier P."/>
            <person name="Coutanceau J.-P."/>
            <person name="Gouzy J."/>
            <person name="Parra G."/>
            <person name="Lardier G."/>
            <person name="Chapple C."/>
            <person name="McKernan K.J."/>
            <person name="McEwan P."/>
            <person name="Bosak S."/>
            <person name="Kellis M."/>
            <person name="Volff J.-N."/>
            <person name="Guigo R."/>
            <person name="Zody M.C."/>
            <person name="Mesirov J."/>
            <person name="Lindblad-Toh K."/>
            <person name="Birren B."/>
            <person name="Nusbaum C."/>
            <person name="Kahn D."/>
            <person name="Robinson-Rechavi M."/>
            <person name="Laudet V."/>
            <person name="Schachter V."/>
            <person name="Quetier F."/>
            <person name="Saurin W."/>
            <person name="Scarpelli C."/>
            <person name="Wincker P."/>
            <person name="Lander E.S."/>
            <person name="Weissenbach J."/>
            <person name="Roest Crollius H."/>
        </authorList>
    </citation>
    <scope>NUCLEOTIDE SEQUENCE [LARGE SCALE GENOMIC DNA]</scope>
</reference>
<sequence length="349" mass="38894">MSNLSGKVQTVLGPVDPEQLGKTLTHEHLTMSFECCYHPPPAGDEAVAESPFQMQHMYWLRQNPYSCHENLLLLQETLAVREELLAYRKAGGGAVVENTTTGIQRDLPTLRQLSKDTGVHIIAGAGYYVDCTHTEDTRRMSVEKLSDVIVSEVLHGADGTDIRCGVIGEIGTCWPITDSERKVLKATAHAQSQLGCPVIIHPGRNPAAPAEVVRILQEAGGDISKTVMSHLDRTIFDEGELLEFAKLGSYLEYDLFGMEMLNYPYNSEVDMPSDSQRVKALAFLVKEGYEDKIVVAHDIHTKNRLTKFGGHGYSHILKNIVPKMLRRGISQRQVDKILVDNPKEWLTFK</sequence>
<protein>
    <recommendedName>
        <fullName evidence="5">N-acetyltaurine hydrolase</fullName>
        <ecNumber evidence="2">3.1.-.-</ecNumber>
    </recommendedName>
    <alternativeName>
        <fullName evidence="2">Phosphotriesterase-related protein</fullName>
    </alternativeName>
</protein>
<keyword id="KW-0963">Cytoplasm</keyword>
<keyword id="KW-0378">Hydrolase</keyword>
<keyword id="KW-0479">Metal-binding</keyword>
<keyword id="KW-1185">Reference proteome</keyword>
<dbReference type="EC" id="3.1.-.-" evidence="2"/>
<dbReference type="EMBL" id="CAAE01014981">
    <property type="protein sequence ID" value="CAG07103.1"/>
    <property type="molecule type" value="Genomic_DNA"/>
</dbReference>
<dbReference type="SMR" id="Q4RWX9"/>
<dbReference type="FunCoup" id="Q4RWX9">
    <property type="interactions" value="48"/>
</dbReference>
<dbReference type="STRING" id="99883.ENSTNIP00000017883"/>
<dbReference type="Ensembl" id="ENSTNIT00000018107.1">
    <property type="protein sequence ID" value="ENSTNIP00000017883.1"/>
    <property type="gene ID" value="ENSTNIG00000014842.1"/>
</dbReference>
<dbReference type="KEGG" id="tng:GSTEN00027649G001"/>
<dbReference type="GeneTree" id="ENSGT00390000006960"/>
<dbReference type="HOGENOM" id="CLU_054760_0_1_1"/>
<dbReference type="InParanoid" id="Q4RWX9"/>
<dbReference type="OMA" id="MVKCGFI"/>
<dbReference type="OrthoDB" id="9998343at2759"/>
<dbReference type="TreeFam" id="TF323205"/>
<dbReference type="Proteomes" id="UP000007303">
    <property type="component" value="Unassembled WGS sequence"/>
</dbReference>
<dbReference type="GO" id="GO:0005829">
    <property type="term" value="C:cytosol"/>
    <property type="evidence" value="ECO:0000250"/>
    <property type="project" value="UniProtKB"/>
</dbReference>
<dbReference type="GO" id="GO:0141215">
    <property type="term" value="F:N-acetyltaurine hydrolase activity"/>
    <property type="evidence" value="ECO:0000250"/>
    <property type="project" value="UniProtKB"/>
</dbReference>
<dbReference type="GO" id="GO:0008270">
    <property type="term" value="F:zinc ion binding"/>
    <property type="evidence" value="ECO:0007669"/>
    <property type="project" value="InterPro"/>
</dbReference>
<dbReference type="GO" id="GO:0009056">
    <property type="term" value="P:catabolic process"/>
    <property type="evidence" value="ECO:0007669"/>
    <property type="project" value="InterPro"/>
</dbReference>
<dbReference type="GO" id="GO:0032098">
    <property type="term" value="P:regulation of appetite"/>
    <property type="evidence" value="ECO:0000250"/>
    <property type="project" value="UniProtKB"/>
</dbReference>
<dbReference type="GO" id="GO:0019530">
    <property type="term" value="P:taurine metabolic process"/>
    <property type="evidence" value="ECO:0000250"/>
    <property type="project" value="UniProtKB"/>
</dbReference>
<dbReference type="CDD" id="cd00530">
    <property type="entry name" value="PTE"/>
    <property type="match status" value="1"/>
</dbReference>
<dbReference type="Gene3D" id="3.20.20.140">
    <property type="entry name" value="Metal-dependent hydrolases"/>
    <property type="match status" value="1"/>
</dbReference>
<dbReference type="InterPro" id="IPR017947">
    <property type="entry name" value="AryldialkylPase_Zn-BS"/>
</dbReference>
<dbReference type="InterPro" id="IPR032466">
    <property type="entry name" value="Metal_Hydrolase"/>
</dbReference>
<dbReference type="InterPro" id="IPR001559">
    <property type="entry name" value="Phosphotriesterase"/>
</dbReference>
<dbReference type="PANTHER" id="PTHR10819">
    <property type="entry name" value="PHOSPHOTRIESTERASE-RELATED"/>
    <property type="match status" value="1"/>
</dbReference>
<dbReference type="PANTHER" id="PTHR10819:SF3">
    <property type="entry name" value="PHOSPHOTRIESTERASE-RELATED PROTEIN"/>
    <property type="match status" value="1"/>
</dbReference>
<dbReference type="Pfam" id="PF02126">
    <property type="entry name" value="PTE"/>
    <property type="match status" value="1"/>
</dbReference>
<dbReference type="SUPFAM" id="SSF51556">
    <property type="entry name" value="Metallo-dependent hydrolases"/>
    <property type="match status" value="1"/>
</dbReference>
<dbReference type="PROSITE" id="PS01322">
    <property type="entry name" value="PHOSPHOTRIESTERASE_1"/>
    <property type="match status" value="1"/>
</dbReference>
<dbReference type="PROSITE" id="PS51347">
    <property type="entry name" value="PHOSPHOTRIESTERASE_2"/>
    <property type="match status" value="1"/>
</dbReference>
<organism>
    <name type="scientific">Tetraodon nigroviridis</name>
    <name type="common">Spotted green pufferfish</name>
    <name type="synonym">Chelonodon nigroviridis</name>
    <dbReference type="NCBI Taxonomy" id="99883"/>
    <lineage>
        <taxon>Eukaryota</taxon>
        <taxon>Metazoa</taxon>
        <taxon>Chordata</taxon>
        <taxon>Craniata</taxon>
        <taxon>Vertebrata</taxon>
        <taxon>Euteleostomi</taxon>
        <taxon>Actinopterygii</taxon>
        <taxon>Neopterygii</taxon>
        <taxon>Teleostei</taxon>
        <taxon>Neoteleostei</taxon>
        <taxon>Acanthomorphata</taxon>
        <taxon>Eupercaria</taxon>
        <taxon>Tetraodontiformes</taxon>
        <taxon>Tetradontoidea</taxon>
        <taxon>Tetraodontidae</taxon>
        <taxon>Tetraodon</taxon>
    </lineage>
</organism>
<proteinExistence type="inferred from homology"/>
<gene>
    <name type="primary">pter</name>
    <name type="ORF">GSTENG00027649001</name>
</gene>
<comment type="function">
    <text evidence="2">N-acetyltaurine hydrolase that catalyzes the hydrolysis of N-acetyltaurine into taurine and acetate. PTER also acts on other N-acetyl amino acids (Met, Ile, Leu, Val) and N-propionyltaurine, but at lower rates.</text>
</comment>
<comment type="catalytic activity">
    <reaction evidence="3">
        <text>N-acetyltaurine + H2O = taurine + acetate</text>
        <dbReference type="Rhea" id="RHEA:81107"/>
        <dbReference type="ChEBI" id="CHEBI:15377"/>
        <dbReference type="ChEBI" id="CHEBI:30089"/>
        <dbReference type="ChEBI" id="CHEBI:133737"/>
        <dbReference type="ChEBI" id="CHEBI:507393"/>
    </reaction>
    <physiologicalReaction direction="left-to-right" evidence="3">
        <dbReference type="Rhea" id="RHEA:81108"/>
    </physiologicalReaction>
</comment>
<comment type="catalytic activity">
    <reaction evidence="2">
        <text>N-propanoyltaurine + H2O = propanoate + taurine</text>
        <dbReference type="Rhea" id="RHEA:81111"/>
        <dbReference type="ChEBI" id="CHEBI:15377"/>
        <dbReference type="ChEBI" id="CHEBI:17272"/>
        <dbReference type="ChEBI" id="CHEBI:231795"/>
        <dbReference type="ChEBI" id="CHEBI:507393"/>
    </reaction>
    <physiologicalReaction direction="left-to-right" evidence="2">
        <dbReference type="Rhea" id="RHEA:81112"/>
    </physiologicalReaction>
</comment>
<comment type="catalytic activity">
    <reaction evidence="2">
        <text>N-acetyl-L-methionine + H2O = L-methionine + acetate</text>
        <dbReference type="Rhea" id="RHEA:67440"/>
        <dbReference type="ChEBI" id="CHEBI:15377"/>
        <dbReference type="ChEBI" id="CHEBI:30089"/>
        <dbReference type="ChEBI" id="CHEBI:57844"/>
        <dbReference type="ChEBI" id="CHEBI:71670"/>
    </reaction>
    <physiologicalReaction direction="left-to-right" evidence="2">
        <dbReference type="Rhea" id="RHEA:67441"/>
    </physiologicalReaction>
</comment>
<comment type="catalytic activity">
    <reaction evidence="2">
        <text>N-acetyl-L-isoleucine + H2O = L-isoleucine + acetate</text>
        <dbReference type="Rhea" id="RHEA:81119"/>
        <dbReference type="ChEBI" id="CHEBI:15377"/>
        <dbReference type="ChEBI" id="CHEBI:30089"/>
        <dbReference type="ChEBI" id="CHEBI:58045"/>
        <dbReference type="ChEBI" id="CHEBI:133735"/>
    </reaction>
    <physiologicalReaction direction="left-to-right" evidence="2">
        <dbReference type="Rhea" id="RHEA:81120"/>
    </physiologicalReaction>
</comment>
<comment type="catalytic activity">
    <reaction evidence="2">
        <text>N-acetyl-L-leucine + H2O = L-leucine + acetate</text>
        <dbReference type="Rhea" id="RHEA:81115"/>
        <dbReference type="ChEBI" id="CHEBI:15377"/>
        <dbReference type="ChEBI" id="CHEBI:30089"/>
        <dbReference type="ChEBI" id="CHEBI:57427"/>
        <dbReference type="ChEBI" id="CHEBI:58270"/>
    </reaction>
    <physiologicalReaction direction="left-to-right" evidence="2">
        <dbReference type="Rhea" id="RHEA:81116"/>
    </physiologicalReaction>
</comment>
<comment type="catalytic activity">
    <reaction evidence="2">
        <text>N-acetyl-L-valine + H2O = L-valine + acetate</text>
        <dbReference type="Rhea" id="RHEA:81123"/>
        <dbReference type="ChEBI" id="CHEBI:15377"/>
        <dbReference type="ChEBI" id="CHEBI:30089"/>
        <dbReference type="ChEBI" id="CHEBI:57762"/>
        <dbReference type="ChEBI" id="CHEBI:133716"/>
    </reaction>
    <physiologicalReaction direction="left-to-right" evidence="2">
        <dbReference type="Rhea" id="RHEA:81124"/>
    </physiologicalReaction>
</comment>
<comment type="cofactor">
    <cofactor evidence="1">
        <name>a divalent metal cation</name>
        <dbReference type="ChEBI" id="CHEBI:60240"/>
    </cofactor>
    <text evidence="1">Binds 2 divalent metal cations per subunit.</text>
</comment>
<comment type="subcellular location">
    <subcellularLocation>
        <location evidence="2">Cytoplasm</location>
        <location evidence="2">Cytosol</location>
    </subcellularLocation>
</comment>
<comment type="similarity">
    <text evidence="4">Belongs to the metallo-dependent hydrolases superfamily. Phosphotriesterase family.</text>
</comment>
<accession>Q4RWX9</accession>
<evidence type="ECO:0000250" key="1">
    <source>
        <dbReference type="UniProtKB" id="P45548"/>
    </source>
</evidence>
<evidence type="ECO:0000250" key="2">
    <source>
        <dbReference type="UniProtKB" id="Q60866"/>
    </source>
</evidence>
<evidence type="ECO:0000250" key="3">
    <source>
        <dbReference type="UniProtKB" id="Q96BW5"/>
    </source>
</evidence>
<evidence type="ECO:0000255" key="4">
    <source>
        <dbReference type="PROSITE-ProRule" id="PRU00679"/>
    </source>
</evidence>
<evidence type="ECO:0000305" key="5"/>